<organism>
    <name type="scientific">Halorhodospira halophila (strain DSM 244 / SL1)</name>
    <name type="common">Ectothiorhodospira halophila (strain DSM 244 / SL1)</name>
    <dbReference type="NCBI Taxonomy" id="349124"/>
    <lineage>
        <taxon>Bacteria</taxon>
        <taxon>Pseudomonadati</taxon>
        <taxon>Pseudomonadota</taxon>
        <taxon>Gammaproteobacteria</taxon>
        <taxon>Chromatiales</taxon>
        <taxon>Ectothiorhodospiraceae</taxon>
        <taxon>Halorhodospira</taxon>
    </lineage>
</organism>
<sequence length="89" mass="10488">MSLNAEQKSEIVEQFRRSPSDTGSPEVQIALLSARIQHLTEHFSVHKQDHHSRQGLLKLVSQRRKLLDYLKRKDRGRYQDVIERLGIRK</sequence>
<proteinExistence type="inferred from homology"/>
<name>RS15_HALHL</name>
<comment type="function">
    <text evidence="1">One of the primary rRNA binding proteins, it binds directly to 16S rRNA where it helps nucleate assembly of the platform of the 30S subunit by binding and bridging several RNA helices of the 16S rRNA.</text>
</comment>
<comment type="function">
    <text evidence="1">Forms an intersubunit bridge (bridge B4) with the 23S rRNA of the 50S subunit in the ribosome.</text>
</comment>
<comment type="subunit">
    <text evidence="1">Part of the 30S ribosomal subunit. Forms a bridge to the 50S subunit in the 70S ribosome, contacting the 23S rRNA.</text>
</comment>
<comment type="similarity">
    <text evidence="1">Belongs to the universal ribosomal protein uS15 family.</text>
</comment>
<gene>
    <name evidence="1" type="primary">rpsO</name>
    <name type="ordered locus">Hhal_1746</name>
</gene>
<accession>A1WXU8</accession>
<evidence type="ECO:0000255" key="1">
    <source>
        <dbReference type="HAMAP-Rule" id="MF_01343"/>
    </source>
</evidence>
<evidence type="ECO:0000256" key="2">
    <source>
        <dbReference type="SAM" id="MobiDB-lite"/>
    </source>
</evidence>
<evidence type="ECO:0000305" key="3"/>
<keyword id="KW-1185">Reference proteome</keyword>
<keyword id="KW-0687">Ribonucleoprotein</keyword>
<keyword id="KW-0689">Ribosomal protein</keyword>
<keyword id="KW-0694">RNA-binding</keyword>
<keyword id="KW-0699">rRNA-binding</keyword>
<dbReference type="EMBL" id="CP000544">
    <property type="protein sequence ID" value="ABM62510.1"/>
    <property type="molecule type" value="Genomic_DNA"/>
</dbReference>
<dbReference type="RefSeq" id="WP_011814532.1">
    <property type="nucleotide sequence ID" value="NC_008789.1"/>
</dbReference>
<dbReference type="SMR" id="A1WXU8"/>
<dbReference type="STRING" id="349124.Hhal_1746"/>
<dbReference type="KEGG" id="hha:Hhal_1746"/>
<dbReference type="eggNOG" id="COG0184">
    <property type="taxonomic scope" value="Bacteria"/>
</dbReference>
<dbReference type="HOGENOM" id="CLU_148518_0_0_6"/>
<dbReference type="OrthoDB" id="9799262at2"/>
<dbReference type="Proteomes" id="UP000000647">
    <property type="component" value="Chromosome"/>
</dbReference>
<dbReference type="GO" id="GO:0022627">
    <property type="term" value="C:cytosolic small ribosomal subunit"/>
    <property type="evidence" value="ECO:0007669"/>
    <property type="project" value="TreeGrafter"/>
</dbReference>
<dbReference type="GO" id="GO:0019843">
    <property type="term" value="F:rRNA binding"/>
    <property type="evidence" value="ECO:0007669"/>
    <property type="project" value="UniProtKB-UniRule"/>
</dbReference>
<dbReference type="GO" id="GO:0003735">
    <property type="term" value="F:structural constituent of ribosome"/>
    <property type="evidence" value="ECO:0007669"/>
    <property type="project" value="InterPro"/>
</dbReference>
<dbReference type="GO" id="GO:0006412">
    <property type="term" value="P:translation"/>
    <property type="evidence" value="ECO:0007669"/>
    <property type="project" value="UniProtKB-UniRule"/>
</dbReference>
<dbReference type="CDD" id="cd00353">
    <property type="entry name" value="Ribosomal_S15p_S13e"/>
    <property type="match status" value="1"/>
</dbReference>
<dbReference type="FunFam" id="1.10.287.10:FF:000002">
    <property type="entry name" value="30S ribosomal protein S15"/>
    <property type="match status" value="1"/>
</dbReference>
<dbReference type="Gene3D" id="6.10.250.3130">
    <property type="match status" value="1"/>
</dbReference>
<dbReference type="Gene3D" id="1.10.287.10">
    <property type="entry name" value="S15/NS1, RNA-binding"/>
    <property type="match status" value="1"/>
</dbReference>
<dbReference type="HAMAP" id="MF_01343_B">
    <property type="entry name" value="Ribosomal_uS15_B"/>
    <property type="match status" value="1"/>
</dbReference>
<dbReference type="InterPro" id="IPR000589">
    <property type="entry name" value="Ribosomal_uS15"/>
</dbReference>
<dbReference type="InterPro" id="IPR005290">
    <property type="entry name" value="Ribosomal_uS15_bac-type"/>
</dbReference>
<dbReference type="InterPro" id="IPR009068">
    <property type="entry name" value="uS15_NS1_RNA-bd_sf"/>
</dbReference>
<dbReference type="NCBIfam" id="TIGR00952">
    <property type="entry name" value="S15_bact"/>
    <property type="match status" value="1"/>
</dbReference>
<dbReference type="PANTHER" id="PTHR23321">
    <property type="entry name" value="RIBOSOMAL PROTEIN S15, BACTERIAL AND ORGANELLAR"/>
    <property type="match status" value="1"/>
</dbReference>
<dbReference type="PANTHER" id="PTHR23321:SF26">
    <property type="entry name" value="SMALL RIBOSOMAL SUBUNIT PROTEIN US15M"/>
    <property type="match status" value="1"/>
</dbReference>
<dbReference type="Pfam" id="PF00312">
    <property type="entry name" value="Ribosomal_S15"/>
    <property type="match status" value="1"/>
</dbReference>
<dbReference type="SMART" id="SM01387">
    <property type="entry name" value="Ribosomal_S15"/>
    <property type="match status" value="1"/>
</dbReference>
<dbReference type="SUPFAM" id="SSF47060">
    <property type="entry name" value="S15/NS1 RNA-binding domain"/>
    <property type="match status" value="1"/>
</dbReference>
<dbReference type="PROSITE" id="PS00362">
    <property type="entry name" value="RIBOSOMAL_S15"/>
    <property type="match status" value="1"/>
</dbReference>
<protein>
    <recommendedName>
        <fullName evidence="1">Small ribosomal subunit protein uS15</fullName>
    </recommendedName>
    <alternativeName>
        <fullName evidence="3">30S ribosomal protein S15</fullName>
    </alternativeName>
</protein>
<reference key="1">
    <citation type="submission" date="2006-12" db="EMBL/GenBank/DDBJ databases">
        <title>Complete sequence of Halorhodospira halophila SL1.</title>
        <authorList>
            <consortium name="US DOE Joint Genome Institute"/>
            <person name="Copeland A."/>
            <person name="Lucas S."/>
            <person name="Lapidus A."/>
            <person name="Barry K."/>
            <person name="Detter J.C."/>
            <person name="Glavina del Rio T."/>
            <person name="Hammon N."/>
            <person name="Israni S."/>
            <person name="Dalin E."/>
            <person name="Tice H."/>
            <person name="Pitluck S."/>
            <person name="Saunders E."/>
            <person name="Brettin T."/>
            <person name="Bruce D."/>
            <person name="Han C."/>
            <person name="Tapia R."/>
            <person name="Schmutz J."/>
            <person name="Larimer F."/>
            <person name="Land M."/>
            <person name="Hauser L."/>
            <person name="Kyrpides N."/>
            <person name="Mikhailova N."/>
            <person name="Hoff W."/>
            <person name="Richardson P."/>
        </authorList>
    </citation>
    <scope>NUCLEOTIDE SEQUENCE [LARGE SCALE GENOMIC DNA]</scope>
    <source>
        <strain>DSM 244 / SL1</strain>
    </source>
</reference>
<feature type="chain" id="PRO_1000054793" description="Small ribosomal subunit protein uS15">
    <location>
        <begin position="1"/>
        <end position="89"/>
    </location>
</feature>
<feature type="region of interest" description="Disordered" evidence="2">
    <location>
        <begin position="1"/>
        <end position="24"/>
    </location>
</feature>
<feature type="compositionally biased region" description="Basic and acidic residues" evidence="2">
    <location>
        <begin position="7"/>
        <end position="19"/>
    </location>
</feature>